<organism>
    <name type="scientific">Mus musculus</name>
    <name type="common">Mouse</name>
    <dbReference type="NCBI Taxonomy" id="10090"/>
    <lineage>
        <taxon>Eukaryota</taxon>
        <taxon>Metazoa</taxon>
        <taxon>Chordata</taxon>
        <taxon>Craniata</taxon>
        <taxon>Vertebrata</taxon>
        <taxon>Euteleostomi</taxon>
        <taxon>Mammalia</taxon>
        <taxon>Eutheria</taxon>
        <taxon>Euarchontoglires</taxon>
        <taxon>Glires</taxon>
        <taxon>Rodentia</taxon>
        <taxon>Myomorpha</taxon>
        <taxon>Muroidea</taxon>
        <taxon>Muridae</taxon>
        <taxon>Murinae</taxon>
        <taxon>Mus</taxon>
        <taxon>Mus</taxon>
    </lineage>
</organism>
<protein>
    <recommendedName>
        <fullName>Fascin</fullName>
    </recommendedName>
    <alternativeName>
        <fullName>Singed-like protein</fullName>
    </alternativeName>
</protein>
<reference key="1">
    <citation type="journal article" date="1995" name="J. Biol. Chem.">
        <title>Cloning and expression of a murine fascin homolog from mouse brain.</title>
        <authorList>
            <person name="Edwards R.A."/>
            <person name="Herrera-Sosa H."/>
            <person name="Otto J."/>
            <person name="Bryan J."/>
        </authorList>
    </citation>
    <scope>NUCLEOTIDE SEQUENCE [MRNA]</scope>
    <scope>PROTEIN SEQUENCE OF 2-11</scope>
    <scope>FUNCTION</scope>
    <scope>TISSUE SPECIFICITY</scope>
    <source>
        <strain>BALB/cJ</strain>
        <tissue>Brain</tissue>
    </source>
</reference>
<reference key="2">
    <citation type="journal article" date="1996" name="J. Cell Biol.">
        <title>Beta-catenin associates with the actin-bundling protein fascin in a noncadherin complex.</title>
        <authorList>
            <person name="Tao Y.S."/>
            <person name="Edwards R.A."/>
            <person name="Tubb B."/>
            <person name="Wang S."/>
            <person name="Bryan J."/>
            <person name="McCrea P.D."/>
        </authorList>
    </citation>
    <scope>NUCLEOTIDE SEQUENCE [GENOMIC DNA]</scope>
    <scope>ASSOCIATION WITH CTNNB1</scope>
    <source>
        <strain>129/SvJ</strain>
    </source>
</reference>
<reference key="3">
    <citation type="journal article" date="2005" name="Science">
        <title>The transcriptional landscape of the mammalian genome.</title>
        <authorList>
            <person name="Carninci P."/>
            <person name="Kasukawa T."/>
            <person name="Katayama S."/>
            <person name="Gough J."/>
            <person name="Frith M.C."/>
            <person name="Maeda N."/>
            <person name="Oyama R."/>
            <person name="Ravasi T."/>
            <person name="Lenhard B."/>
            <person name="Wells C."/>
            <person name="Kodzius R."/>
            <person name="Shimokawa K."/>
            <person name="Bajic V.B."/>
            <person name="Brenner S.E."/>
            <person name="Batalov S."/>
            <person name="Forrest A.R."/>
            <person name="Zavolan M."/>
            <person name="Davis M.J."/>
            <person name="Wilming L.G."/>
            <person name="Aidinis V."/>
            <person name="Allen J.E."/>
            <person name="Ambesi-Impiombato A."/>
            <person name="Apweiler R."/>
            <person name="Aturaliya R.N."/>
            <person name="Bailey T.L."/>
            <person name="Bansal M."/>
            <person name="Baxter L."/>
            <person name="Beisel K.W."/>
            <person name="Bersano T."/>
            <person name="Bono H."/>
            <person name="Chalk A.M."/>
            <person name="Chiu K.P."/>
            <person name="Choudhary V."/>
            <person name="Christoffels A."/>
            <person name="Clutterbuck D.R."/>
            <person name="Crowe M.L."/>
            <person name="Dalla E."/>
            <person name="Dalrymple B.P."/>
            <person name="de Bono B."/>
            <person name="Della Gatta G."/>
            <person name="di Bernardo D."/>
            <person name="Down T."/>
            <person name="Engstrom P."/>
            <person name="Fagiolini M."/>
            <person name="Faulkner G."/>
            <person name="Fletcher C.F."/>
            <person name="Fukushima T."/>
            <person name="Furuno M."/>
            <person name="Futaki S."/>
            <person name="Gariboldi M."/>
            <person name="Georgii-Hemming P."/>
            <person name="Gingeras T.R."/>
            <person name="Gojobori T."/>
            <person name="Green R.E."/>
            <person name="Gustincich S."/>
            <person name="Harbers M."/>
            <person name="Hayashi Y."/>
            <person name="Hensch T.K."/>
            <person name="Hirokawa N."/>
            <person name="Hill D."/>
            <person name="Huminiecki L."/>
            <person name="Iacono M."/>
            <person name="Ikeo K."/>
            <person name="Iwama A."/>
            <person name="Ishikawa T."/>
            <person name="Jakt M."/>
            <person name="Kanapin A."/>
            <person name="Katoh M."/>
            <person name="Kawasawa Y."/>
            <person name="Kelso J."/>
            <person name="Kitamura H."/>
            <person name="Kitano H."/>
            <person name="Kollias G."/>
            <person name="Krishnan S.P."/>
            <person name="Kruger A."/>
            <person name="Kummerfeld S.K."/>
            <person name="Kurochkin I.V."/>
            <person name="Lareau L.F."/>
            <person name="Lazarevic D."/>
            <person name="Lipovich L."/>
            <person name="Liu J."/>
            <person name="Liuni S."/>
            <person name="McWilliam S."/>
            <person name="Madan Babu M."/>
            <person name="Madera M."/>
            <person name="Marchionni L."/>
            <person name="Matsuda H."/>
            <person name="Matsuzawa S."/>
            <person name="Miki H."/>
            <person name="Mignone F."/>
            <person name="Miyake S."/>
            <person name="Morris K."/>
            <person name="Mottagui-Tabar S."/>
            <person name="Mulder N."/>
            <person name="Nakano N."/>
            <person name="Nakauchi H."/>
            <person name="Ng P."/>
            <person name="Nilsson R."/>
            <person name="Nishiguchi S."/>
            <person name="Nishikawa S."/>
            <person name="Nori F."/>
            <person name="Ohara O."/>
            <person name="Okazaki Y."/>
            <person name="Orlando V."/>
            <person name="Pang K.C."/>
            <person name="Pavan W.J."/>
            <person name="Pavesi G."/>
            <person name="Pesole G."/>
            <person name="Petrovsky N."/>
            <person name="Piazza S."/>
            <person name="Reed J."/>
            <person name="Reid J.F."/>
            <person name="Ring B.Z."/>
            <person name="Ringwald M."/>
            <person name="Rost B."/>
            <person name="Ruan Y."/>
            <person name="Salzberg S.L."/>
            <person name="Sandelin A."/>
            <person name="Schneider C."/>
            <person name="Schoenbach C."/>
            <person name="Sekiguchi K."/>
            <person name="Semple C.A."/>
            <person name="Seno S."/>
            <person name="Sessa L."/>
            <person name="Sheng Y."/>
            <person name="Shibata Y."/>
            <person name="Shimada H."/>
            <person name="Shimada K."/>
            <person name="Silva D."/>
            <person name="Sinclair B."/>
            <person name="Sperling S."/>
            <person name="Stupka E."/>
            <person name="Sugiura K."/>
            <person name="Sultana R."/>
            <person name="Takenaka Y."/>
            <person name="Taki K."/>
            <person name="Tammoja K."/>
            <person name="Tan S.L."/>
            <person name="Tang S."/>
            <person name="Taylor M.S."/>
            <person name="Tegner J."/>
            <person name="Teichmann S.A."/>
            <person name="Ueda H.R."/>
            <person name="van Nimwegen E."/>
            <person name="Verardo R."/>
            <person name="Wei C.L."/>
            <person name="Yagi K."/>
            <person name="Yamanishi H."/>
            <person name="Zabarovsky E."/>
            <person name="Zhu S."/>
            <person name="Zimmer A."/>
            <person name="Hide W."/>
            <person name="Bult C."/>
            <person name="Grimmond S.M."/>
            <person name="Teasdale R.D."/>
            <person name="Liu E.T."/>
            <person name="Brusic V."/>
            <person name="Quackenbush J."/>
            <person name="Wahlestedt C."/>
            <person name="Mattick J.S."/>
            <person name="Hume D.A."/>
            <person name="Kai C."/>
            <person name="Sasaki D."/>
            <person name="Tomaru Y."/>
            <person name="Fukuda S."/>
            <person name="Kanamori-Katayama M."/>
            <person name="Suzuki M."/>
            <person name="Aoki J."/>
            <person name="Arakawa T."/>
            <person name="Iida J."/>
            <person name="Imamura K."/>
            <person name="Itoh M."/>
            <person name="Kato T."/>
            <person name="Kawaji H."/>
            <person name="Kawagashira N."/>
            <person name="Kawashima T."/>
            <person name="Kojima M."/>
            <person name="Kondo S."/>
            <person name="Konno H."/>
            <person name="Nakano K."/>
            <person name="Ninomiya N."/>
            <person name="Nishio T."/>
            <person name="Okada M."/>
            <person name="Plessy C."/>
            <person name="Shibata K."/>
            <person name="Shiraki T."/>
            <person name="Suzuki S."/>
            <person name="Tagami M."/>
            <person name="Waki K."/>
            <person name="Watahiki A."/>
            <person name="Okamura-Oho Y."/>
            <person name="Suzuki H."/>
            <person name="Kawai J."/>
            <person name="Hayashizaki Y."/>
        </authorList>
    </citation>
    <scope>NUCLEOTIDE SEQUENCE [LARGE SCALE MRNA]</scope>
    <source>
        <strain>C57BL/6J</strain>
        <tissue>Placenta</tissue>
    </source>
</reference>
<reference key="4">
    <citation type="journal article" date="2004" name="Genome Res.">
        <title>The status, quality, and expansion of the NIH full-length cDNA project: the Mammalian Gene Collection (MGC).</title>
        <authorList>
            <consortium name="The MGC Project Team"/>
        </authorList>
    </citation>
    <scope>NUCLEOTIDE SEQUENCE [LARGE SCALE MRNA]</scope>
    <source>
        <strain>C57BL/6J</strain>
        <strain>FVB/N</strain>
        <tissue>Embryonic brain</tissue>
        <tissue>Mammary gland</tissue>
    </source>
</reference>
<reference key="5">
    <citation type="submission" date="2007-04" db="UniProtKB">
        <authorList>
            <person name="Lubec G."/>
            <person name="Klug S."/>
            <person name="Kang S.U."/>
        </authorList>
    </citation>
    <scope>PROTEIN SEQUENCE OF 23-32; 69-82; 132-149; 168-185; 202-217; 248-271; 380-389 AND 409-426</scope>
    <scope>IDENTIFICATION BY MASS SPECTROMETRY</scope>
    <source>
        <strain>C57BL/6J</strain>
        <tissue>Brain</tissue>
        <tissue>Hippocampus</tissue>
    </source>
</reference>
<reference key="6">
    <citation type="journal article" date="2010" name="Cell">
        <title>A tissue-specific atlas of mouse protein phosphorylation and expression.</title>
        <authorList>
            <person name="Huttlin E.L."/>
            <person name="Jedrychowski M.P."/>
            <person name="Elias J.E."/>
            <person name="Goswami T."/>
            <person name="Rad R."/>
            <person name="Beausoleil S.A."/>
            <person name="Villen J."/>
            <person name="Haas W."/>
            <person name="Sowa M.E."/>
            <person name="Gygi S.P."/>
        </authorList>
    </citation>
    <scope>IDENTIFICATION BY MASS SPECTROMETRY [LARGE SCALE ANALYSIS]</scope>
    <source>
        <tissue>Brain</tissue>
        <tissue>Brown adipose tissue</tissue>
        <tissue>Heart</tissue>
        <tissue>Kidney</tissue>
        <tissue>Liver</tissue>
        <tissue>Lung</tissue>
        <tissue>Pancreas</tissue>
        <tissue>Spleen</tissue>
        <tissue>Testis</tissue>
    </source>
</reference>
<reference key="7">
    <citation type="journal article" date="2010" name="Nature">
        <title>Migrastatin analogues target fascin to block tumour metastasis.</title>
        <authorList>
            <person name="Chen L."/>
            <person name="Yang S."/>
            <person name="Jakoncic J."/>
            <person name="Zhang J.J."/>
            <person name="Huang X.Y."/>
        </authorList>
    </citation>
    <scope>IDENTIFICATION BY MASS SPECTROMETRY</scope>
</reference>
<reference key="8">
    <citation type="journal article" date="2011" name="J. Biol. Chem.">
        <title>Mechanism of actin filament bundling by fascin.</title>
        <authorList>
            <person name="Jansen S."/>
            <person name="Collins A."/>
            <person name="Yang C."/>
            <person name="Rebowski G."/>
            <person name="Svitkina T."/>
            <person name="Dominguez R."/>
        </authorList>
    </citation>
    <scope>FUNCTION</scope>
</reference>
<reference key="9">
    <citation type="journal article" date="2011" name="Sci. Signal.">
        <title>Neuronal growth cone retraction relies on proneurotrophin receptor signaling through Rac.</title>
        <authorList>
            <person name="Deinhardt K."/>
            <person name="Kim T."/>
            <person name="Spellman D.S."/>
            <person name="Mains R.E."/>
            <person name="Eipper B.A."/>
            <person name="Neubert T.A."/>
            <person name="Chao M.V."/>
            <person name="Hempstead B.L."/>
        </authorList>
    </citation>
    <scope>SUBCELLULAR LOCATION</scope>
</reference>
<reference key="10">
    <citation type="journal article" date="2012" name="Oncogene">
        <title>Semaphorin 5A and plexin-B3 regulate human glioma cell motility and morphology through Rac1 and the actin cytoskeleton.</title>
        <authorList>
            <person name="Li X."/>
            <person name="Law J.W."/>
            <person name="Lee A.Y."/>
        </authorList>
    </citation>
    <scope>INTERACTION WITH PLXNB3</scope>
</reference>
<reference key="11">
    <citation type="journal article" date="2013" name="Mol. Cell">
        <title>SIRT5-mediated lysine desuccinylation impacts diverse metabolic pathways.</title>
        <authorList>
            <person name="Park J."/>
            <person name="Chen Y."/>
            <person name="Tishkoff D.X."/>
            <person name="Peng C."/>
            <person name="Tan M."/>
            <person name="Dai L."/>
            <person name="Xie Z."/>
            <person name="Zhang Y."/>
            <person name="Zwaans B.M."/>
            <person name="Skinner M.E."/>
            <person name="Lombard D.B."/>
            <person name="Zhao Y."/>
        </authorList>
    </citation>
    <scope>ACETYLATION [LARGE SCALE ANALYSIS] AT LYS-74</scope>
    <scope>IDENTIFICATION BY MASS SPECTROMETRY [LARGE SCALE ANALYSIS]</scope>
    <source>
        <tissue>Embryonic fibroblast</tissue>
    </source>
</reference>
<reference key="12">
    <citation type="journal article" date="2014" name="J. Neurochem.">
        <title>Rufy3, a protein specifically expressed in neurons, interacts with actin-bundling protein Fascin to control the growth of axons.</title>
        <authorList>
            <person name="Wei Z."/>
            <person name="Sun M."/>
            <person name="Liu X."/>
            <person name="Zhang J."/>
            <person name="Jin Y."/>
        </authorList>
    </citation>
    <scope>INTERACTION WITH RUFY3</scope>
    <scope>SUBCELLULAR LOCATION</scope>
</reference>
<comment type="function">
    <text evidence="2 3 7">Actin-binding protein that contains 2 major actin binding sites (By similarity). Organizes filamentous actin into parallel bundles (PubMed:7738015). Plays a role in the organization of actin filament bundles and the formation of microspikes, membrane ruffles, and stress fibers (By similarity). Important for the formation of a diverse set of cell protrusions, such as filopodia, and for cell motility and migration (PubMed:21685497). Mediates reorganization of the actin cytoskeleton and axon growth cone collapse in response to NGF (By similarity).</text>
</comment>
<comment type="subunit">
    <text evidence="1 4 6 8">Interacts with RUFY3 (via N-terminus); the interaction induces neuron axon development (PubMed:24720729). Interacts with NGFR (By similarity). Associates with CTNNB1 (PubMed:8794867). Interacts with PLXNB3 (PubMed:21706053).</text>
</comment>
<comment type="interaction">
    <interactant intactId="EBI-2308857">
        <id>Q61553</id>
    </interactant>
    <interactant intactId="EBI-6271317">
        <id>Q9QY40</id>
        <label>Plxnb3</label>
    </interactant>
    <organismsDiffer>false</organismsDiffer>
    <experiments>3</experiments>
</comment>
<comment type="interaction">
    <interactant intactId="EBI-2308857">
        <id>Q61553</id>
    </interactant>
    <interactant intactId="EBI-367540">
        <id>P68135</id>
        <label>ACTA1</label>
    </interactant>
    <organismsDiffer>true</organismsDiffer>
    <experiments>2</experiments>
</comment>
<comment type="subcellular location">
    <subcellularLocation>
        <location evidence="2">Cytoplasm</location>
        <location evidence="2">Cytosol</location>
    </subcellularLocation>
    <subcellularLocation>
        <location evidence="2">Cytoplasm</location>
        <location evidence="2">Cell cortex</location>
    </subcellularLocation>
    <subcellularLocation>
        <location evidence="2">Cytoplasm</location>
        <location evidence="2">Cytoskeleton</location>
    </subcellularLocation>
    <subcellularLocation>
        <location evidence="2">Cytoplasm</location>
        <location evidence="2">Cytoskeleton</location>
        <location evidence="2">Stress fiber</location>
    </subcellularLocation>
    <subcellularLocation>
        <location evidence="5 6">Cell projection</location>
        <location evidence="5 6">Growth cone</location>
    </subcellularLocation>
    <subcellularLocation>
        <location evidence="5 6">Cell projection</location>
        <location evidence="5 6">Filopodium</location>
    </subcellularLocation>
    <subcellularLocation>
        <location evidence="6">Cell projection</location>
        <location evidence="6">Invadopodium</location>
    </subcellularLocation>
    <subcellularLocation>
        <location evidence="2">Cell projection</location>
        <location evidence="2">Microvillus</location>
    </subcellularLocation>
    <subcellularLocation>
        <location evidence="2">Cell junction</location>
    </subcellularLocation>
    <text evidence="2 6">Colocalized with RUFY3 and F-actin at filipodia of the axonal growth cone (PubMed:24720729). Colocalized with DBN1 and F-actin at the transitional domain of the axonal growth cone (PubMed:24720729).</text>
</comment>
<comment type="tissue specificity">
    <text evidence="7">Most abundant in brain. Detected at lower levels in lung, uterus, small intestine and spleen (at protein level).</text>
</comment>
<comment type="domain">
    <text evidence="2">Composed of four fascin beta-trefoil domains.</text>
</comment>
<comment type="PTM">
    <text evidence="2">Phosphorylation at Ser-39 inhibits actin-binding. Phosphorylation is required for the reorganization of the actin cytoskeleton in response to NGF.</text>
</comment>
<comment type="similarity">
    <text evidence="9">Belongs to the fascin family.</text>
</comment>
<name>FSCN1_MOUSE</name>
<gene>
    <name type="primary">Fscn1</name>
    <name type="synonym">Fan1</name>
    <name type="synonym">Snl</name>
</gene>
<proteinExistence type="evidence at protein level"/>
<sequence length="493" mass="54508">MTANGTAEAVQIQFGLISCGNKYLTAEAFGFKVNASASSLKKKQIWTLEQPPDEAGSAAVCLRSHLGRYLAADKDGNVTCEREVPDGDCRFLVVAHDDGRWSLQSEAHRRYFGGTEDRLSCFAQSVSPAEKWSVHIAMHPQVNIYSVTRKRYAHLSARPADEIAVDRDVPWGVDSLITLAFQDQRYSVQTSDHRFLRHDGRLVARPEPATGFTLEFRSGKVAFRDCEGRYLAPSGPSGTLKAGKATKVGKDELFALEQSCAQVVLQAANERNVSTRQGMDLSANQDEETDQETFQLEIDRDTRKCAFRTHTGKYWTLTATGGVQSTASTKNASCYFDIEWCDRRITLRASNGKFVTAKKNGQLAASVETAGDSELFLMKLINRPIIVFRGEHGFIGCRKVTGTLDANRSSYDVFQLEFNDGAYNIKDSTGKYWTVGSDSSVTSSSDTPVDFFLEFCDYNKVALKVGGRYLKGDHAGVLKACAETIDPASLWEY</sequence>
<accession>Q61553</accession>
<accession>O09099</accession>
<accession>O09156</accession>
<accession>Q05DK3</accession>
<accession>Q7TN32</accession>
<accession>Q80V75</accession>
<feature type="initiator methionine" description="Removed" evidence="2 7">
    <location>
        <position position="1"/>
    </location>
</feature>
<feature type="chain" id="PRO_0000219380" description="Fascin">
    <location>
        <begin position="2"/>
        <end position="493"/>
    </location>
</feature>
<feature type="modified residue" description="N-acetylthreonine" evidence="2">
    <location>
        <position position="2"/>
    </location>
</feature>
<feature type="modified residue" description="Phosphoserine" evidence="2">
    <location>
        <position position="38"/>
    </location>
</feature>
<feature type="modified residue" description="Phosphoserine; by PKC" evidence="2">
    <location>
        <position position="39"/>
    </location>
</feature>
<feature type="modified residue" description="N6-acetyllysine" evidence="10">
    <location>
        <position position="74"/>
    </location>
</feature>
<feature type="modified residue" description="Phosphoserine" evidence="2">
    <location>
        <position position="127"/>
    </location>
</feature>
<feature type="modified residue" description="Phosphoserine" evidence="2">
    <location>
        <position position="234"/>
    </location>
</feature>
<feature type="modified residue" description="Phosphothreonine" evidence="2">
    <location>
        <position position="239"/>
    </location>
</feature>
<feature type="modified residue" description="Phosphothreonine" evidence="1">
    <location>
        <position position="403"/>
    </location>
</feature>
<feature type="cross-link" description="Glycyl lysine isopeptide (Lys-Gly) (interchain with G-Cter in SUMO2)" evidence="2">
    <location>
        <position position="399"/>
    </location>
</feature>
<feature type="sequence conflict" description="In Ref. 1; AAB41126 and 2; AAB58784." evidence="9" ref="1 2">
    <original>S</original>
    <variation>T</variation>
    <location>
        <position position="64"/>
    </location>
</feature>
<feature type="sequence conflict" description="In Ref. 1; AAB41126 and 2; AAB58784." evidence="9" ref="1 2">
    <original>Q</original>
    <variation>E</variation>
    <location>
        <position position="262"/>
    </location>
</feature>
<feature type="sequence conflict" description="In Ref. 1; AAB41126 and 2; AAB58784." evidence="9" ref="1 2">
    <original>R</original>
    <variation>G</variation>
    <location>
        <position position="271"/>
    </location>
</feature>
<feature type="sequence conflict" description="In Ref. 1; AAB41126 and 2; AAB58784." evidence="9" ref="1 2">
    <original>QL</original>
    <variation>HV</variation>
    <location>
        <begin position="362"/>
        <end position="363"/>
    </location>
</feature>
<feature type="sequence conflict" description="In Ref. 1; AAB41126 and 2; AAB58784." evidence="9" ref="1 2">
    <original>V</original>
    <variation>A</variation>
    <location>
        <position position="387"/>
    </location>
</feature>
<feature type="sequence conflict" description="In Ref. 1; AAB41126 and 2; AAB58784." evidence="9" ref="1 2">
    <original>G</original>
    <variation>A</variation>
    <location>
        <position position="396"/>
    </location>
</feature>
<dbReference type="EMBL" id="L33726">
    <property type="protein sequence ID" value="AAB41126.1"/>
    <property type="molecule type" value="mRNA"/>
</dbReference>
<dbReference type="EMBL" id="U90355">
    <property type="protein sequence ID" value="AAB58784.1"/>
    <property type="molecule type" value="Genomic_DNA"/>
</dbReference>
<dbReference type="EMBL" id="AK167670">
    <property type="protein sequence ID" value="BAE39719.1"/>
    <property type="molecule type" value="mRNA"/>
</dbReference>
<dbReference type="EMBL" id="BC010338">
    <property type="protein sequence ID" value="AAH10338.1"/>
    <property type="molecule type" value="mRNA"/>
</dbReference>
<dbReference type="EMBL" id="BC037137">
    <property type="protein sequence ID" value="AAH37137.2"/>
    <property type="molecule type" value="mRNA"/>
</dbReference>
<dbReference type="EMBL" id="BC052408">
    <property type="protein sequence ID" value="AAH52408.1"/>
    <property type="molecule type" value="mRNA"/>
</dbReference>
<dbReference type="CCDS" id="CCDS19834.1"/>
<dbReference type="PIR" id="A56430">
    <property type="entry name" value="A56430"/>
</dbReference>
<dbReference type="RefSeq" id="NP_032010.2">
    <property type="nucleotide sequence ID" value="NM_007984.2"/>
</dbReference>
<dbReference type="SMR" id="Q61553"/>
<dbReference type="BioGRID" id="199590">
    <property type="interactions" value="10"/>
</dbReference>
<dbReference type="DIP" id="DIP-54657N"/>
<dbReference type="FunCoup" id="Q61553">
    <property type="interactions" value="698"/>
</dbReference>
<dbReference type="IntAct" id="Q61553">
    <property type="interactions" value="6"/>
</dbReference>
<dbReference type="MINT" id="Q61553"/>
<dbReference type="STRING" id="10090.ENSMUSP00000031565"/>
<dbReference type="GlyGen" id="Q61553">
    <property type="glycosylation" value="4 sites, 2 N-linked glycans (2 sites), 1 O-linked glycan (1 site)"/>
</dbReference>
<dbReference type="iPTMnet" id="Q61553"/>
<dbReference type="PhosphoSitePlus" id="Q61553"/>
<dbReference type="SwissPalm" id="Q61553"/>
<dbReference type="REPRODUCTION-2DPAGE" id="IPI00353563"/>
<dbReference type="jPOST" id="Q61553"/>
<dbReference type="PaxDb" id="10090-ENSMUSP00000031565"/>
<dbReference type="PeptideAtlas" id="Q61553"/>
<dbReference type="ProteomicsDB" id="271609"/>
<dbReference type="Pumba" id="Q61553"/>
<dbReference type="Antibodypedia" id="1483">
    <property type="antibodies" value="916 antibodies from 45 providers"/>
</dbReference>
<dbReference type="DNASU" id="14086"/>
<dbReference type="Ensembl" id="ENSMUST00000031565.15">
    <property type="protein sequence ID" value="ENSMUSP00000031565.9"/>
    <property type="gene ID" value="ENSMUSG00000029581.15"/>
</dbReference>
<dbReference type="GeneID" id="14086"/>
<dbReference type="KEGG" id="mmu:14086"/>
<dbReference type="UCSC" id="uc009ajl.1">
    <property type="organism name" value="mouse"/>
</dbReference>
<dbReference type="AGR" id="MGI:1352745"/>
<dbReference type="CTD" id="6624"/>
<dbReference type="MGI" id="MGI:1352745">
    <property type="gene designation" value="Fscn1"/>
</dbReference>
<dbReference type="VEuPathDB" id="HostDB:ENSMUSG00000029581"/>
<dbReference type="eggNOG" id="ENOG502QPRX">
    <property type="taxonomic scope" value="Eukaryota"/>
</dbReference>
<dbReference type="GeneTree" id="ENSGT00950000183157"/>
<dbReference type="HOGENOM" id="CLU_030960_2_0_1"/>
<dbReference type="InParanoid" id="Q61553"/>
<dbReference type="OMA" id="SMTRKRY"/>
<dbReference type="OrthoDB" id="10259868at2759"/>
<dbReference type="PhylomeDB" id="Q61553"/>
<dbReference type="TreeFam" id="TF323992"/>
<dbReference type="BioGRID-ORCS" id="14086">
    <property type="hits" value="1 hit in 80 CRISPR screens"/>
</dbReference>
<dbReference type="CD-CODE" id="CE726F99">
    <property type="entry name" value="Postsynaptic density"/>
</dbReference>
<dbReference type="ChiTaRS" id="Fscn1">
    <property type="organism name" value="mouse"/>
</dbReference>
<dbReference type="PRO" id="PR:Q61553"/>
<dbReference type="Proteomes" id="UP000000589">
    <property type="component" value="Chromosome 5"/>
</dbReference>
<dbReference type="RNAct" id="Q61553">
    <property type="molecule type" value="protein"/>
</dbReference>
<dbReference type="Bgee" id="ENSMUSG00000029581">
    <property type="expression patterns" value="Expressed in external carotid artery and 298 other cell types or tissues"/>
</dbReference>
<dbReference type="ExpressionAtlas" id="Q61553">
    <property type="expression patterns" value="baseline and differential"/>
</dbReference>
<dbReference type="GO" id="GO:0015629">
    <property type="term" value="C:actin cytoskeleton"/>
    <property type="evidence" value="ECO:0000250"/>
    <property type="project" value="UniProtKB"/>
</dbReference>
<dbReference type="GO" id="GO:0005938">
    <property type="term" value="C:cell cortex"/>
    <property type="evidence" value="ECO:0007669"/>
    <property type="project" value="UniProtKB-SubCell"/>
</dbReference>
<dbReference type="GO" id="GO:0031253">
    <property type="term" value="C:cell projection membrane"/>
    <property type="evidence" value="ECO:0000250"/>
    <property type="project" value="UniProtKB"/>
</dbReference>
<dbReference type="GO" id="GO:0005911">
    <property type="term" value="C:cell-cell junction"/>
    <property type="evidence" value="ECO:0000250"/>
    <property type="project" value="UniProtKB"/>
</dbReference>
<dbReference type="GO" id="GO:0005737">
    <property type="term" value="C:cytoplasm"/>
    <property type="evidence" value="ECO:0000250"/>
    <property type="project" value="UniProtKB"/>
</dbReference>
<dbReference type="GO" id="GO:0005856">
    <property type="term" value="C:cytoskeleton"/>
    <property type="evidence" value="ECO:0000250"/>
    <property type="project" value="UniProtKB"/>
</dbReference>
<dbReference type="GO" id="GO:0005829">
    <property type="term" value="C:cytosol"/>
    <property type="evidence" value="ECO:0007669"/>
    <property type="project" value="UniProtKB-SubCell"/>
</dbReference>
<dbReference type="GO" id="GO:0030175">
    <property type="term" value="C:filopodium"/>
    <property type="evidence" value="ECO:0000314"/>
    <property type="project" value="UniProtKB"/>
</dbReference>
<dbReference type="GO" id="GO:0030426">
    <property type="term" value="C:growth cone"/>
    <property type="evidence" value="ECO:0000314"/>
    <property type="project" value="UniProtKB"/>
</dbReference>
<dbReference type="GO" id="GO:0030027">
    <property type="term" value="C:lamellipodium"/>
    <property type="evidence" value="ECO:0000314"/>
    <property type="project" value="UniProtKB"/>
</dbReference>
<dbReference type="GO" id="GO:0044393">
    <property type="term" value="C:microspike"/>
    <property type="evidence" value="ECO:0000250"/>
    <property type="project" value="UniProtKB"/>
</dbReference>
<dbReference type="GO" id="GO:0005902">
    <property type="term" value="C:microvillus"/>
    <property type="evidence" value="ECO:0000250"/>
    <property type="project" value="UniProtKB"/>
</dbReference>
<dbReference type="GO" id="GO:0043209">
    <property type="term" value="C:myelin sheath"/>
    <property type="evidence" value="ECO:0007005"/>
    <property type="project" value="UniProtKB"/>
</dbReference>
<dbReference type="GO" id="GO:0002102">
    <property type="term" value="C:podosome"/>
    <property type="evidence" value="ECO:0000250"/>
    <property type="project" value="UniProtKB"/>
</dbReference>
<dbReference type="GO" id="GO:0001726">
    <property type="term" value="C:ruffle"/>
    <property type="evidence" value="ECO:0000250"/>
    <property type="project" value="UniProtKB"/>
</dbReference>
<dbReference type="GO" id="GO:0001725">
    <property type="term" value="C:stress fiber"/>
    <property type="evidence" value="ECO:0000250"/>
    <property type="project" value="UniProtKB"/>
</dbReference>
<dbReference type="GO" id="GO:0051015">
    <property type="term" value="F:actin filament binding"/>
    <property type="evidence" value="ECO:0000314"/>
    <property type="project" value="MGI"/>
</dbReference>
<dbReference type="GO" id="GO:0030674">
    <property type="term" value="F:protein-macromolecule adaptor activity"/>
    <property type="evidence" value="ECO:0007669"/>
    <property type="project" value="InterPro"/>
</dbReference>
<dbReference type="GO" id="GO:0051017">
    <property type="term" value="P:actin filament bundle assembly"/>
    <property type="evidence" value="ECO:0000314"/>
    <property type="project" value="MGI"/>
</dbReference>
<dbReference type="GO" id="GO:0016477">
    <property type="term" value="P:cell migration"/>
    <property type="evidence" value="ECO:0000315"/>
    <property type="project" value="UniProtKB"/>
</dbReference>
<dbReference type="GO" id="GO:0048870">
    <property type="term" value="P:cell motility"/>
    <property type="evidence" value="ECO:0000250"/>
    <property type="project" value="UniProtKB"/>
</dbReference>
<dbReference type="GO" id="GO:0007043">
    <property type="term" value="P:cell-cell junction assembly"/>
    <property type="evidence" value="ECO:0000250"/>
    <property type="project" value="UniProtKB"/>
</dbReference>
<dbReference type="GO" id="GO:0035089">
    <property type="term" value="P:establishment of apical/basal cell polarity"/>
    <property type="evidence" value="ECO:0000250"/>
    <property type="project" value="UniProtKB"/>
</dbReference>
<dbReference type="GO" id="GO:0030035">
    <property type="term" value="P:microspike assembly"/>
    <property type="evidence" value="ECO:0000250"/>
    <property type="project" value="UniProtKB"/>
</dbReference>
<dbReference type="GO" id="GO:0030046">
    <property type="term" value="P:parallel actin filament bundle assembly"/>
    <property type="evidence" value="ECO:0007669"/>
    <property type="project" value="Ensembl"/>
</dbReference>
<dbReference type="GO" id="GO:0090091">
    <property type="term" value="P:positive regulation of extracellular matrix disassembly"/>
    <property type="evidence" value="ECO:0000250"/>
    <property type="project" value="UniProtKB"/>
</dbReference>
<dbReference type="GO" id="GO:0051491">
    <property type="term" value="P:positive regulation of filopodium assembly"/>
    <property type="evidence" value="ECO:0000315"/>
    <property type="project" value="UniProtKB"/>
</dbReference>
<dbReference type="GO" id="GO:0010592">
    <property type="term" value="P:positive regulation of lamellipodium assembly"/>
    <property type="evidence" value="ECO:0000250"/>
    <property type="project" value="UniProtKB"/>
</dbReference>
<dbReference type="GO" id="GO:0071803">
    <property type="term" value="P:positive regulation of podosome assembly"/>
    <property type="evidence" value="ECO:0000250"/>
    <property type="project" value="UniProtKB"/>
</dbReference>
<dbReference type="GO" id="GO:0032956">
    <property type="term" value="P:regulation of actin cytoskeleton organization"/>
    <property type="evidence" value="ECO:0000250"/>
    <property type="project" value="UniProtKB"/>
</dbReference>
<dbReference type="GO" id="GO:0032534">
    <property type="term" value="P:regulation of microvillus assembly"/>
    <property type="evidence" value="ECO:0000250"/>
    <property type="project" value="UniProtKB"/>
</dbReference>
<dbReference type="CDD" id="cd23344">
    <property type="entry name" value="beta-trefoil_FSCN1_rpt1"/>
    <property type="match status" value="1"/>
</dbReference>
<dbReference type="CDD" id="cd23348">
    <property type="entry name" value="beta-trefoil_FSCN1_rpt2"/>
    <property type="match status" value="1"/>
</dbReference>
<dbReference type="CDD" id="cd23352">
    <property type="entry name" value="beta-trefoil_FSCN1_rpt3"/>
    <property type="match status" value="1"/>
</dbReference>
<dbReference type="FunFam" id="2.80.10.50:FF:000008">
    <property type="entry name" value="Fascin"/>
    <property type="match status" value="1"/>
</dbReference>
<dbReference type="FunFam" id="2.80.10.50:FF:000010">
    <property type="entry name" value="Fascin"/>
    <property type="match status" value="1"/>
</dbReference>
<dbReference type="FunFam" id="2.80.10.50:FF:000015">
    <property type="entry name" value="Fascin"/>
    <property type="match status" value="1"/>
</dbReference>
<dbReference type="FunFam" id="2.80.10.50:FF:000030">
    <property type="entry name" value="Fascin"/>
    <property type="match status" value="1"/>
</dbReference>
<dbReference type="Gene3D" id="2.80.10.50">
    <property type="match status" value="4"/>
</dbReference>
<dbReference type="InterPro" id="IPR008999">
    <property type="entry name" value="Actin-crosslinking"/>
</dbReference>
<dbReference type="InterPro" id="IPR010431">
    <property type="entry name" value="Fascin"/>
</dbReference>
<dbReference type="InterPro" id="IPR022768">
    <property type="entry name" value="Fascin-like_dom"/>
</dbReference>
<dbReference type="InterPro" id="IPR024703">
    <property type="entry name" value="Fascin_metazoans"/>
</dbReference>
<dbReference type="PANTHER" id="PTHR10551">
    <property type="entry name" value="FASCIN"/>
    <property type="match status" value="1"/>
</dbReference>
<dbReference type="PANTHER" id="PTHR10551:SF23">
    <property type="entry name" value="FASCIN"/>
    <property type="match status" value="1"/>
</dbReference>
<dbReference type="Pfam" id="PF06268">
    <property type="entry name" value="Fascin"/>
    <property type="match status" value="4"/>
</dbReference>
<dbReference type="PIRSF" id="PIRSF005682">
    <property type="entry name" value="Fascin"/>
    <property type="match status" value="1"/>
</dbReference>
<dbReference type="SUPFAM" id="SSF50405">
    <property type="entry name" value="Actin-crosslinking proteins"/>
    <property type="match status" value="4"/>
</dbReference>
<evidence type="ECO:0000250" key="1">
    <source>
        <dbReference type="UniProtKB" id="P85845"/>
    </source>
</evidence>
<evidence type="ECO:0000250" key="2">
    <source>
        <dbReference type="UniProtKB" id="Q16658"/>
    </source>
</evidence>
<evidence type="ECO:0000269" key="3">
    <source>
    </source>
</evidence>
<evidence type="ECO:0000269" key="4">
    <source>
    </source>
</evidence>
<evidence type="ECO:0000269" key="5">
    <source>
    </source>
</evidence>
<evidence type="ECO:0000269" key="6">
    <source>
    </source>
</evidence>
<evidence type="ECO:0000269" key="7">
    <source>
    </source>
</evidence>
<evidence type="ECO:0000269" key="8">
    <source>
    </source>
</evidence>
<evidence type="ECO:0000305" key="9"/>
<evidence type="ECO:0007744" key="10">
    <source>
    </source>
</evidence>
<keyword id="KW-0007">Acetylation</keyword>
<keyword id="KW-0009">Actin-binding</keyword>
<keyword id="KW-0965">Cell junction</keyword>
<keyword id="KW-0966">Cell projection</keyword>
<keyword id="KW-0963">Cytoplasm</keyword>
<keyword id="KW-0206">Cytoskeleton</keyword>
<keyword id="KW-0903">Direct protein sequencing</keyword>
<keyword id="KW-1017">Isopeptide bond</keyword>
<keyword id="KW-0597">Phosphoprotein</keyword>
<keyword id="KW-1185">Reference proteome</keyword>
<keyword id="KW-0832">Ubl conjugation</keyword>